<comment type="function">
    <text evidence="1">NDH-1 shuttles electrons from NADH, via FMN and iron-sulfur (Fe-S) centers, to quinones in the respiratory chain. The immediate electron acceptor for the enzyme in this species is believed to be ubiquinone. Couples the redox reaction to proton translocation (for every two electrons transferred, four hydrogen ions are translocated across the cytoplasmic membrane), and thus conserves the redox energy in a proton gradient.</text>
</comment>
<comment type="catalytic activity">
    <reaction evidence="1">
        <text>a quinone + NADH + 5 H(+)(in) = a quinol + NAD(+) + 4 H(+)(out)</text>
        <dbReference type="Rhea" id="RHEA:57888"/>
        <dbReference type="ChEBI" id="CHEBI:15378"/>
        <dbReference type="ChEBI" id="CHEBI:24646"/>
        <dbReference type="ChEBI" id="CHEBI:57540"/>
        <dbReference type="ChEBI" id="CHEBI:57945"/>
        <dbReference type="ChEBI" id="CHEBI:132124"/>
    </reaction>
</comment>
<comment type="subunit">
    <text evidence="1">NDH-1 is composed of 13 different subunits. Subunits NuoA, H, J, K, L, M, N constitute the membrane sector of the complex.</text>
</comment>
<comment type="subcellular location">
    <subcellularLocation>
        <location evidence="1">Cell inner membrane</location>
        <topology evidence="1">Multi-pass membrane protein</topology>
    </subcellularLocation>
</comment>
<comment type="similarity">
    <text evidence="1">Belongs to the complex I subunit 3 family.</text>
</comment>
<accession>B1JGL3</accession>
<evidence type="ECO:0000255" key="1">
    <source>
        <dbReference type="HAMAP-Rule" id="MF_01394"/>
    </source>
</evidence>
<evidence type="ECO:0000256" key="2">
    <source>
        <dbReference type="SAM" id="MobiDB-lite"/>
    </source>
</evidence>
<proteinExistence type="inferred from homology"/>
<gene>
    <name evidence="1" type="primary">nuoA</name>
    <name type="ordered locus">YPK_1560</name>
</gene>
<protein>
    <recommendedName>
        <fullName evidence="1">NADH-quinone oxidoreductase subunit A</fullName>
        <ecNumber evidence="1">7.1.1.-</ecNumber>
    </recommendedName>
    <alternativeName>
        <fullName evidence="1">NADH dehydrogenase I subunit A</fullName>
    </alternativeName>
    <alternativeName>
        <fullName evidence="1">NDH-1 subunit A</fullName>
    </alternativeName>
    <alternativeName>
        <fullName evidence="1">NUO1</fullName>
    </alternativeName>
</protein>
<feature type="chain" id="PRO_5000315598" description="NADH-quinone oxidoreductase subunit A">
    <location>
        <begin position="1"/>
        <end position="166"/>
    </location>
</feature>
<feature type="transmembrane region" description="Helical" evidence="1">
    <location>
        <begin position="16"/>
        <end position="36"/>
    </location>
</feature>
<feature type="transmembrane region" description="Helical" evidence="1">
    <location>
        <begin position="68"/>
        <end position="88"/>
    </location>
</feature>
<feature type="transmembrane region" description="Helical" evidence="1">
    <location>
        <begin position="98"/>
        <end position="118"/>
    </location>
</feature>
<feature type="region of interest" description="Disordered" evidence="2">
    <location>
        <begin position="141"/>
        <end position="166"/>
    </location>
</feature>
<reference key="1">
    <citation type="submission" date="2008-02" db="EMBL/GenBank/DDBJ databases">
        <title>Complete sequence of Yersinia pseudotuberculosis YPIII.</title>
        <authorList>
            <consortium name="US DOE Joint Genome Institute"/>
            <person name="Copeland A."/>
            <person name="Lucas S."/>
            <person name="Lapidus A."/>
            <person name="Glavina del Rio T."/>
            <person name="Dalin E."/>
            <person name="Tice H."/>
            <person name="Bruce D."/>
            <person name="Goodwin L."/>
            <person name="Pitluck S."/>
            <person name="Munk A.C."/>
            <person name="Brettin T."/>
            <person name="Detter J.C."/>
            <person name="Han C."/>
            <person name="Tapia R."/>
            <person name="Schmutz J."/>
            <person name="Larimer F."/>
            <person name="Land M."/>
            <person name="Hauser L."/>
            <person name="Challacombe J.F."/>
            <person name="Green L."/>
            <person name="Lindler L.E."/>
            <person name="Nikolich M.P."/>
            <person name="Richardson P."/>
        </authorList>
    </citation>
    <scope>NUCLEOTIDE SEQUENCE [LARGE SCALE GENOMIC DNA]</scope>
    <source>
        <strain>YPIII</strain>
    </source>
</reference>
<sequence>MRMSTTTEIIAHHWAFAVFLIGAVGLCGLMLLGAYFLGGRAQARAKNVPYESGIDSVGSARMRLSAKFYLVAMFFVIFDVEALYLYAWSISIRESGWIGFIEAAIFILVLLAGLFYLVRIGALDWTPTRSNRRVSKPSTVRYASSHPQDISQELSVAGSQQANESR</sequence>
<name>NUOA_YERPY</name>
<keyword id="KW-0997">Cell inner membrane</keyword>
<keyword id="KW-1003">Cell membrane</keyword>
<keyword id="KW-0472">Membrane</keyword>
<keyword id="KW-0520">NAD</keyword>
<keyword id="KW-0874">Quinone</keyword>
<keyword id="KW-1278">Translocase</keyword>
<keyword id="KW-0812">Transmembrane</keyword>
<keyword id="KW-1133">Transmembrane helix</keyword>
<keyword id="KW-0813">Transport</keyword>
<keyword id="KW-0830">Ubiquinone</keyword>
<dbReference type="EC" id="7.1.1.-" evidence="1"/>
<dbReference type="EMBL" id="CP000950">
    <property type="protein sequence ID" value="ACA67853.1"/>
    <property type="molecule type" value="Genomic_DNA"/>
</dbReference>
<dbReference type="RefSeq" id="WP_002210279.1">
    <property type="nucleotide sequence ID" value="NZ_CP009792.1"/>
</dbReference>
<dbReference type="SMR" id="B1JGL3"/>
<dbReference type="KEGG" id="ypy:YPK_1560"/>
<dbReference type="GO" id="GO:0030964">
    <property type="term" value="C:NADH dehydrogenase complex"/>
    <property type="evidence" value="ECO:0007669"/>
    <property type="project" value="TreeGrafter"/>
</dbReference>
<dbReference type="GO" id="GO:0005886">
    <property type="term" value="C:plasma membrane"/>
    <property type="evidence" value="ECO:0007669"/>
    <property type="project" value="UniProtKB-SubCell"/>
</dbReference>
<dbReference type="GO" id="GO:0008137">
    <property type="term" value="F:NADH dehydrogenase (ubiquinone) activity"/>
    <property type="evidence" value="ECO:0007669"/>
    <property type="project" value="InterPro"/>
</dbReference>
<dbReference type="GO" id="GO:0050136">
    <property type="term" value="F:NADH:ubiquinone reductase (non-electrogenic) activity"/>
    <property type="evidence" value="ECO:0007669"/>
    <property type="project" value="UniProtKB-UniRule"/>
</dbReference>
<dbReference type="GO" id="GO:0048038">
    <property type="term" value="F:quinone binding"/>
    <property type="evidence" value="ECO:0007669"/>
    <property type="project" value="UniProtKB-KW"/>
</dbReference>
<dbReference type="FunFam" id="1.20.58.1610:FF:000003">
    <property type="entry name" value="NADH-quinone oxidoreductase subunit A"/>
    <property type="match status" value="1"/>
</dbReference>
<dbReference type="Gene3D" id="1.20.58.1610">
    <property type="entry name" value="NADH:ubiquinone/plastoquinone oxidoreductase, chain 3"/>
    <property type="match status" value="1"/>
</dbReference>
<dbReference type="HAMAP" id="MF_01394">
    <property type="entry name" value="NDH1_NuoA"/>
    <property type="match status" value="1"/>
</dbReference>
<dbReference type="InterPro" id="IPR023043">
    <property type="entry name" value="NAD(P)H_OxRDtase_bac/plastid"/>
</dbReference>
<dbReference type="InterPro" id="IPR000440">
    <property type="entry name" value="NADH_UbQ/plastoQ_OxRdtase_su3"/>
</dbReference>
<dbReference type="InterPro" id="IPR038430">
    <property type="entry name" value="NDAH_ubi_oxred_su3_sf"/>
</dbReference>
<dbReference type="PANTHER" id="PTHR11058:SF21">
    <property type="entry name" value="NADH-QUINONE OXIDOREDUCTASE SUBUNIT A"/>
    <property type="match status" value="1"/>
</dbReference>
<dbReference type="PANTHER" id="PTHR11058">
    <property type="entry name" value="NADH-UBIQUINONE OXIDOREDUCTASE CHAIN 3"/>
    <property type="match status" value="1"/>
</dbReference>
<dbReference type="Pfam" id="PF00507">
    <property type="entry name" value="Oxidored_q4"/>
    <property type="match status" value="1"/>
</dbReference>
<organism>
    <name type="scientific">Yersinia pseudotuberculosis serotype O:3 (strain YPIII)</name>
    <dbReference type="NCBI Taxonomy" id="502800"/>
    <lineage>
        <taxon>Bacteria</taxon>
        <taxon>Pseudomonadati</taxon>
        <taxon>Pseudomonadota</taxon>
        <taxon>Gammaproteobacteria</taxon>
        <taxon>Enterobacterales</taxon>
        <taxon>Yersiniaceae</taxon>
        <taxon>Yersinia</taxon>
    </lineage>
</organism>